<comment type="function">
    <text evidence="3 4">Catalyzes the conversion of divinyl chlorophyllide to monovinyl chlorophyllide. Reduces the 8-vinyl group of the tetrapyrrole to an ethyl group using NADPH as the reductant. Can use (3,8-divinyl)-chlorophyllide a (DV-Chlidea) &gt; (3,8-divinyl)-chlorophyll a (DV-Chla) &gt; (3,8-divinyl)-protochlorophyllide a (DV-Pchlidea) &gt; (3,8-divinyl)-magnesium-protoporphyrin IX monomethyl ester (DV-MPE) &gt; (3,8-divinyl)-magnesium-protoporphyrin IX (DV-Mg-Proto) as substrates.</text>
</comment>
<comment type="catalytic activity">
    <reaction evidence="3 4">
        <text>protochlorophyllide a + NADP(+) = 3,8-divinyl protochlorophyllide a + NADPH + H(+)</text>
        <dbReference type="Rhea" id="RHEA:48884"/>
        <dbReference type="ChEBI" id="CHEBI:15378"/>
        <dbReference type="ChEBI" id="CHEBI:57783"/>
        <dbReference type="ChEBI" id="CHEBI:58349"/>
        <dbReference type="ChEBI" id="CHEBI:58632"/>
        <dbReference type="ChEBI" id="CHEBI:83350"/>
        <dbReference type="EC" id="1.3.1.75"/>
    </reaction>
</comment>
<comment type="biophysicochemical properties">
    <phDependence>
        <text evidence="4">Optimum pH is 7.0 with DV-Chlidea or DV-Pchlidea as substrate, optimum pH is 6.5 with DV-Chla, DV-MPE or DV-Mg-Proto as substrate.</text>
    </phDependence>
    <temperatureDependence>
        <text evidence="4">Optimum temperature is 25 degrees Celsius with DV-Chlidea or DV-Chla as substrate, Optimum temperature is 20 degrees Celsius with DV-Pchlidea, DV-MPE or DV-Mg-Proto as substrate.</text>
    </temperatureDependence>
</comment>
<comment type="pathway">
    <text>Porphyrin-containing compound metabolism; chlorophyll biosynthesis.</text>
</comment>
<comment type="subcellular location">
    <subcellularLocation>
        <location evidence="1">Plastid</location>
        <location evidence="1">Chloroplast</location>
    </subcellularLocation>
</comment>
<comment type="sequence caution" evidence="5">
    <conflict type="erroneous initiation">
        <sequence resource="EMBL-CDS" id="EEC75257"/>
    </conflict>
    <text>Truncated N-terminus.</text>
</comment>
<evidence type="ECO:0000250" key="1"/>
<evidence type="ECO:0000255" key="2"/>
<evidence type="ECO:0000269" key="3">
    <source>
    </source>
</evidence>
<evidence type="ECO:0000269" key="4">
    <source>
    </source>
</evidence>
<evidence type="ECO:0000305" key="5"/>
<reference key="1">
    <citation type="journal article" date="2010" name="Plant Physiol.">
        <title>Divinyl chlorophyll(ide) a can be converted to monovinyl chlorophyll(ide) a by a divinyl reductase in rice.</title>
        <authorList>
            <person name="Wang P."/>
            <person name="Gao J."/>
            <person name="Wan C."/>
            <person name="Zhang F."/>
            <person name="Xu Z."/>
            <person name="Huang X."/>
            <person name="Sun X."/>
            <person name="Deng X."/>
        </authorList>
    </citation>
    <scope>NUCLEOTIDE SEQUENCE [GENOMIC DNA]</scope>
    <scope>FUNCTION</scope>
    <scope>CATALYTIC ACTIVITY</scope>
    <scope>MUTAGENESIS OF 318-LYS--PRO-320</scope>
</reference>
<reference key="2">
    <citation type="journal article" date="2005" name="PLoS Biol.">
        <title>The genomes of Oryza sativa: a history of duplications.</title>
        <authorList>
            <person name="Yu J."/>
            <person name="Wang J."/>
            <person name="Lin W."/>
            <person name="Li S."/>
            <person name="Li H."/>
            <person name="Zhou J."/>
            <person name="Ni P."/>
            <person name="Dong W."/>
            <person name="Hu S."/>
            <person name="Zeng C."/>
            <person name="Zhang J."/>
            <person name="Zhang Y."/>
            <person name="Li R."/>
            <person name="Xu Z."/>
            <person name="Li S."/>
            <person name="Li X."/>
            <person name="Zheng H."/>
            <person name="Cong L."/>
            <person name="Lin L."/>
            <person name="Yin J."/>
            <person name="Geng J."/>
            <person name="Li G."/>
            <person name="Shi J."/>
            <person name="Liu J."/>
            <person name="Lv H."/>
            <person name="Li J."/>
            <person name="Wang J."/>
            <person name="Deng Y."/>
            <person name="Ran L."/>
            <person name="Shi X."/>
            <person name="Wang X."/>
            <person name="Wu Q."/>
            <person name="Li C."/>
            <person name="Ren X."/>
            <person name="Wang J."/>
            <person name="Wang X."/>
            <person name="Li D."/>
            <person name="Liu D."/>
            <person name="Zhang X."/>
            <person name="Ji Z."/>
            <person name="Zhao W."/>
            <person name="Sun Y."/>
            <person name="Zhang Z."/>
            <person name="Bao J."/>
            <person name="Han Y."/>
            <person name="Dong L."/>
            <person name="Ji J."/>
            <person name="Chen P."/>
            <person name="Wu S."/>
            <person name="Liu J."/>
            <person name="Xiao Y."/>
            <person name="Bu D."/>
            <person name="Tan J."/>
            <person name="Yang L."/>
            <person name="Ye C."/>
            <person name="Zhang J."/>
            <person name="Xu J."/>
            <person name="Zhou Y."/>
            <person name="Yu Y."/>
            <person name="Zhang B."/>
            <person name="Zhuang S."/>
            <person name="Wei H."/>
            <person name="Liu B."/>
            <person name="Lei M."/>
            <person name="Yu H."/>
            <person name="Li Y."/>
            <person name="Xu H."/>
            <person name="Wei S."/>
            <person name="He X."/>
            <person name="Fang L."/>
            <person name="Zhang Z."/>
            <person name="Zhang Y."/>
            <person name="Huang X."/>
            <person name="Su Z."/>
            <person name="Tong W."/>
            <person name="Li J."/>
            <person name="Tong Z."/>
            <person name="Li S."/>
            <person name="Ye J."/>
            <person name="Wang L."/>
            <person name="Fang L."/>
            <person name="Lei T."/>
            <person name="Chen C.-S."/>
            <person name="Chen H.-C."/>
            <person name="Xu Z."/>
            <person name="Li H."/>
            <person name="Huang H."/>
            <person name="Zhang F."/>
            <person name="Xu H."/>
            <person name="Li N."/>
            <person name="Zhao C."/>
            <person name="Li S."/>
            <person name="Dong L."/>
            <person name="Huang Y."/>
            <person name="Li L."/>
            <person name="Xi Y."/>
            <person name="Qi Q."/>
            <person name="Li W."/>
            <person name="Zhang B."/>
            <person name="Hu W."/>
            <person name="Zhang Y."/>
            <person name="Tian X."/>
            <person name="Jiao Y."/>
            <person name="Liang X."/>
            <person name="Jin J."/>
            <person name="Gao L."/>
            <person name="Zheng W."/>
            <person name="Hao B."/>
            <person name="Liu S.-M."/>
            <person name="Wang W."/>
            <person name="Yuan L."/>
            <person name="Cao M."/>
            <person name="McDermott J."/>
            <person name="Samudrala R."/>
            <person name="Wang J."/>
            <person name="Wong G.K.-S."/>
            <person name="Yang H."/>
        </authorList>
    </citation>
    <scope>NUCLEOTIDE SEQUENCE [LARGE SCALE GENOMIC DNA]</scope>
    <source>
        <strain>cv. 93-11</strain>
    </source>
</reference>
<reference key="3">
    <citation type="journal article" date="2013" name="Plant Physiol.">
        <title>One divinyl reductase reduces the 8-vinyl groups in various intermediates of chlorophyll biosynthesis in a given higher plant species, but the isozyme differs between species.</title>
        <authorList>
            <person name="Wang P."/>
            <person name="Wan C."/>
            <person name="Xu Z."/>
            <person name="Wang P."/>
            <person name="Wang W."/>
            <person name="Sun C."/>
            <person name="Ma X."/>
            <person name="Xiao Y."/>
            <person name="Zhu J."/>
            <person name="Gao X."/>
            <person name="Deng X."/>
        </authorList>
    </citation>
    <scope>FUNCTION</scope>
    <scope>CATALYTIC ACTIVITY</scope>
    <scope>BIOPHYSICOCHEMICAL PROPERTIES</scope>
</reference>
<organism>
    <name type="scientific">Oryza sativa subsp. indica</name>
    <name type="common">Rice</name>
    <dbReference type="NCBI Taxonomy" id="39946"/>
    <lineage>
        <taxon>Eukaryota</taxon>
        <taxon>Viridiplantae</taxon>
        <taxon>Streptophyta</taxon>
        <taxon>Embryophyta</taxon>
        <taxon>Tracheophyta</taxon>
        <taxon>Spermatophyta</taxon>
        <taxon>Magnoliopsida</taxon>
        <taxon>Liliopsida</taxon>
        <taxon>Poales</taxon>
        <taxon>Poaceae</taxon>
        <taxon>BOP clade</taxon>
        <taxon>Oryzoideae</taxon>
        <taxon>Oryzeae</taxon>
        <taxon>Oryzinae</taxon>
        <taxon>Oryza</taxon>
        <taxon>Oryza sativa</taxon>
    </lineage>
</organism>
<gene>
    <name type="primary">DVR</name>
    <name type="ORF">OsI_11570</name>
</gene>
<proteinExistence type="evidence at protein level"/>
<feature type="transit peptide" description="Chloroplast" evidence="2">
    <location>
        <begin position="1"/>
        <end position="58"/>
    </location>
</feature>
<feature type="chain" id="PRO_0000422536" description="Divinyl chlorophyllide a 8-vinyl-reductase, chloroplastic">
    <location>
        <begin position="59"/>
        <end position="405"/>
    </location>
</feature>
<feature type="mutagenesis site" description="Loss of catalytic activity and exclusive accumulation of divinyl chlorophylls." evidence="3">
    <location>
        <begin position="318"/>
        <end position="320"/>
    </location>
</feature>
<accession>D5L1S4</accession>
<accession>B8APG8</accession>
<keyword id="KW-0149">Chlorophyll biosynthesis</keyword>
<keyword id="KW-0150">Chloroplast</keyword>
<keyword id="KW-0521">NADP</keyword>
<keyword id="KW-0560">Oxidoreductase</keyword>
<keyword id="KW-0934">Plastid</keyword>
<keyword id="KW-1185">Reference proteome</keyword>
<keyword id="KW-0809">Transit peptide</keyword>
<sequence length="405" mass="43267">MAALLLSSHLTAASSSSTTSPTARPAPSFVSFRAANAAPKGARRGWPFLASSVEPPPAASAAQPFRSLAPSETTVLVTGATGYIGRYVVRELLRRGHPVVAVARPRSGLRGRNGPDEVVADLAPARVVFSDVTDAGALRADLSPHGPIHAAVCCLASRGGGVRDSWRVDYRATLHTLQAARGLGAAHFVLLSAVCVQKPLLEFQRAKLRFEGELAAEASRDPSFTYSIVRPTAFFKSLGGQVETVKNGQPYVMFGDGKLCACKPISEEDLAAFIADCISDEGKANKILPIGGPGKALTPLEQGEMLFRLLGREPRFIKVPIQVMDAAIWVLDALAKVFPGVEDAAEFGKIGRYYASESMLVLDPDTGEYSDEMTPSYGSDTLEQFFERVIREGMAGQELGEQTIF</sequence>
<protein>
    <recommendedName>
        <fullName>Divinyl chlorophyllide a 8-vinyl-reductase, chloroplastic</fullName>
        <ecNumber evidence="3 4">1.3.1.75</ecNumber>
    </recommendedName>
</protein>
<name>DCVR_ORYSI</name>
<dbReference type="EC" id="1.3.1.75" evidence="3 4"/>
<dbReference type="EMBL" id="GU733918">
    <property type="protein sequence ID" value="ADE43128.1"/>
    <property type="molecule type" value="Genomic_DNA"/>
</dbReference>
<dbReference type="EMBL" id="CM000128">
    <property type="protein sequence ID" value="EEC75257.1"/>
    <property type="status" value="ALT_INIT"/>
    <property type="molecule type" value="Genomic_DNA"/>
</dbReference>
<dbReference type="SMR" id="D5L1S4"/>
<dbReference type="STRING" id="39946.D5L1S4"/>
<dbReference type="EnsemblPlants" id="OsGoSa_03g0017560.01">
    <property type="protein sequence ID" value="OsGoSa_03g0017560.01"/>
    <property type="gene ID" value="OsGoSa_03g0017560"/>
</dbReference>
<dbReference type="EnsemblPlants" id="OsIR64_03g0017240.01">
    <property type="protein sequence ID" value="OsIR64_03g0017240.01"/>
    <property type="gene ID" value="OsIR64_03g0017240"/>
</dbReference>
<dbReference type="EnsemblPlants" id="OsKYG_03g0017500.01">
    <property type="protein sequence ID" value="OsKYG_03g0017500.01"/>
    <property type="gene ID" value="OsKYG_03g0017500"/>
</dbReference>
<dbReference type="EnsemblPlants" id="OsLaMu_03g0017340.01">
    <property type="protein sequence ID" value="OsLaMu_03g0017340.01"/>
    <property type="gene ID" value="OsLaMu_03g0017340"/>
</dbReference>
<dbReference type="EnsemblPlants" id="OsLiXu_03g0017440.01">
    <property type="protein sequence ID" value="OsLiXu_03g0017440.01"/>
    <property type="gene ID" value="OsLiXu_03g0017440"/>
</dbReference>
<dbReference type="EnsemblPlants" id="OsMH63_03G017500_01">
    <property type="protein sequence ID" value="OsMH63_03G017500_01"/>
    <property type="gene ID" value="OsMH63_03G017500"/>
</dbReference>
<dbReference type="EnsemblPlants" id="OsZS97_03G017410_01">
    <property type="protein sequence ID" value="OsZS97_03G017410_01"/>
    <property type="gene ID" value="OsZS97_03G017410"/>
</dbReference>
<dbReference type="Gramene" id="OsGoSa_03g0017560.01">
    <property type="protein sequence ID" value="OsGoSa_03g0017560.01"/>
    <property type="gene ID" value="OsGoSa_03g0017560"/>
</dbReference>
<dbReference type="Gramene" id="OsIR64_03g0017240.01">
    <property type="protein sequence ID" value="OsIR64_03g0017240.01"/>
    <property type="gene ID" value="OsIR64_03g0017240"/>
</dbReference>
<dbReference type="Gramene" id="OsKYG_03g0017500.01">
    <property type="protein sequence ID" value="OsKYG_03g0017500.01"/>
    <property type="gene ID" value="OsKYG_03g0017500"/>
</dbReference>
<dbReference type="Gramene" id="OsLaMu_03g0017340.01">
    <property type="protein sequence ID" value="OsLaMu_03g0017340.01"/>
    <property type="gene ID" value="OsLaMu_03g0017340"/>
</dbReference>
<dbReference type="Gramene" id="OsLiXu_03g0017440.01">
    <property type="protein sequence ID" value="OsLiXu_03g0017440.01"/>
    <property type="gene ID" value="OsLiXu_03g0017440"/>
</dbReference>
<dbReference type="Gramene" id="OsMH63_03G017500_01">
    <property type="protein sequence ID" value="OsMH63_03G017500_01"/>
    <property type="gene ID" value="OsMH63_03G017500"/>
</dbReference>
<dbReference type="Gramene" id="OsZS97_03G017410_01">
    <property type="protein sequence ID" value="OsZS97_03G017410_01"/>
    <property type="gene ID" value="OsZS97_03G017410"/>
</dbReference>
<dbReference type="HOGENOM" id="CLU_1716135_0_0_1"/>
<dbReference type="OrthoDB" id="419598at2759"/>
<dbReference type="BRENDA" id="1.3.1.75">
    <property type="organism ID" value="4460"/>
</dbReference>
<dbReference type="UniPathway" id="UPA00668"/>
<dbReference type="Proteomes" id="UP000007015">
    <property type="component" value="Chromosome 3"/>
</dbReference>
<dbReference type="GO" id="GO:0009507">
    <property type="term" value="C:chloroplast"/>
    <property type="evidence" value="ECO:0007669"/>
    <property type="project" value="UniProtKB-SubCell"/>
</dbReference>
<dbReference type="GO" id="GO:0033728">
    <property type="term" value="F:3,8-divinyl protochlorophyllide a 8-vinyl-reductase (NADPH) activity"/>
    <property type="evidence" value="ECO:0007669"/>
    <property type="project" value="UniProtKB-EC"/>
</dbReference>
<dbReference type="GO" id="GO:0015995">
    <property type="term" value="P:chlorophyll biosynthetic process"/>
    <property type="evidence" value="ECO:0007669"/>
    <property type="project" value="UniProtKB-UniPathway"/>
</dbReference>
<dbReference type="CDD" id="cd05243">
    <property type="entry name" value="SDR_a5"/>
    <property type="match status" value="1"/>
</dbReference>
<dbReference type="Gene3D" id="3.40.50.720">
    <property type="entry name" value="NAD(P)-binding Rossmann-like Domain"/>
    <property type="match status" value="1"/>
</dbReference>
<dbReference type="InterPro" id="IPR044201">
    <property type="entry name" value="DVR-like"/>
</dbReference>
<dbReference type="InterPro" id="IPR016040">
    <property type="entry name" value="NAD(P)-bd_dom"/>
</dbReference>
<dbReference type="InterPro" id="IPR036291">
    <property type="entry name" value="NAD(P)-bd_dom_sf"/>
</dbReference>
<dbReference type="PANTHER" id="PTHR47378">
    <property type="entry name" value="DIVINYL CHLOROPHYLLIDE A 8-VINYL-REDUCTASE, CHLOROPLASTIC"/>
    <property type="match status" value="1"/>
</dbReference>
<dbReference type="PANTHER" id="PTHR47378:SF1">
    <property type="entry name" value="DIVINYL CHLOROPHYLLIDE A 8-VINYL-REDUCTASE, CHLOROPLASTIC"/>
    <property type="match status" value="1"/>
</dbReference>
<dbReference type="Pfam" id="PF13460">
    <property type="entry name" value="NAD_binding_10"/>
    <property type="match status" value="1"/>
</dbReference>
<dbReference type="SUPFAM" id="SSF51735">
    <property type="entry name" value="NAD(P)-binding Rossmann-fold domains"/>
    <property type="match status" value="1"/>
</dbReference>